<accession>P55149</accession>
<comment type="function">
    <text evidence="3 5">A minor component of the gas vesicle, may be involved in preventing GvpA aggregation during gas vesicle nucleation (By similarity). Gas vesicles (GV) are hollow, gas filled proteinaceous nanostructures. During planktonic growth they allow positioning of the organism at a favorable depth for light or nutrient acquisition (Probable).</text>
</comment>
<comment type="subunit">
    <text evidence="3">Binds GvpA.</text>
</comment>
<comment type="subcellular location">
    <subcellularLocation>
        <location evidence="3">Gas vesicle</location>
    </subcellularLocation>
    <text evidence="1">Probably faces the interior of the gas vesicle.</text>
</comment>
<comment type="similarity">
    <text evidence="4">Belongs to the gas vesicle GvpF/GvpL family.</text>
</comment>
<comment type="caution">
    <text evidence="4">Originally named GvpL/GvpF, it is more similar to characterized GvpF proteins.</text>
</comment>
<organism>
    <name type="scientific">Dolichospermum flosaquae</name>
    <name type="common">Anabaena flos-aquae</name>
    <dbReference type="NCBI Taxonomy" id="1166"/>
    <lineage>
        <taxon>Bacteria</taxon>
        <taxon>Bacillati</taxon>
        <taxon>Cyanobacteriota</taxon>
        <taxon>Cyanophyceae</taxon>
        <taxon>Nostocales</taxon>
        <taxon>Aphanizomenonaceae</taxon>
        <taxon>Dolichospermum</taxon>
    </lineage>
</organism>
<name>GVPF_DOLFA</name>
<gene>
    <name evidence="4" type="primary">gvpF</name>
</gene>
<protein>
    <recommendedName>
        <fullName evidence="2 4">Gas vesicle protein F</fullName>
        <shortName>GvpF</shortName>
    </recommendedName>
</protein>
<reference key="1">
    <citation type="journal article" date="1997" name="DNA Seq.">
        <title>Genes encoding proteins homologous to halobacterial Gvps N, J, K, F and L are located downstream of gvpC in the cyanobacterium Anabaena flos-aquae.</title>
        <authorList>
            <person name="Kinsman R."/>
            <person name="Hayes P.K."/>
        </authorList>
    </citation>
    <scope>NUCLEOTIDE SEQUENCE [GENOMIC DNA]</scope>
    <source>
        <strain>CCAP 1403/13f</strain>
    </source>
</reference>
<proteinExistence type="inferred from homology"/>
<evidence type="ECO:0000250" key="1">
    <source>
        <dbReference type="UniProtKB" id="A8Y9T3"/>
    </source>
</evidence>
<evidence type="ECO:0000250" key="2">
    <source>
        <dbReference type="UniProtKB" id="Q8YUT3"/>
    </source>
</evidence>
<evidence type="ECO:0000250" key="3">
    <source>
        <dbReference type="UniProtKB" id="Q9HI21"/>
    </source>
</evidence>
<evidence type="ECO:0000305" key="4"/>
<evidence type="ECO:0000305" key="5">
    <source>
    </source>
</evidence>
<keyword id="KW-0304">Gas vesicle</keyword>
<dbReference type="EMBL" id="U17109">
    <property type="protein sequence ID" value="AAA58714.1"/>
    <property type="molecule type" value="Genomic_DNA"/>
</dbReference>
<dbReference type="SMR" id="P55149"/>
<dbReference type="GO" id="GO:0031411">
    <property type="term" value="C:gas vesicle"/>
    <property type="evidence" value="ECO:0007669"/>
    <property type="project" value="UniProtKB-SubCell"/>
</dbReference>
<dbReference type="GO" id="GO:0031412">
    <property type="term" value="P:gas vesicle organization"/>
    <property type="evidence" value="ECO:0007669"/>
    <property type="project" value="InterPro"/>
</dbReference>
<dbReference type="InterPro" id="IPR009430">
    <property type="entry name" value="GvpL/GvpF"/>
</dbReference>
<dbReference type="PANTHER" id="PTHR36852">
    <property type="entry name" value="PROTEIN GVPL 2"/>
    <property type="match status" value="1"/>
</dbReference>
<dbReference type="PANTHER" id="PTHR36852:SF1">
    <property type="entry name" value="PROTEIN GVPL 2"/>
    <property type="match status" value="1"/>
</dbReference>
<dbReference type="Pfam" id="PF06386">
    <property type="entry name" value="GvpL_GvpF"/>
    <property type="match status" value="1"/>
</dbReference>
<sequence length="245" mass="28676">MSIPLYLYGIFPNTIPETLELEGLDKQPVHSQVVDEFCFLYSEARQEKYLASRRNLLTHEKVLEQTMHAGFRVLLPLRFGLVVKDWETIMSQLINPHKDQLNQLFQKLAGKREVSIKIFWDAKAELQTMMESHQDLKQQRDNMEGKKLSMEEVIQIGQLIEINLLARKQAVIEVFSQELNPFAQEIVVSDPMTEEMIYNAAFLIPWESESEFSERVEVIDQKFGDRLRIRYNNFTAPYTFAQLDS</sequence>
<feature type="chain" id="PRO_0000182697" description="Gas vesicle protein F">
    <location>
        <begin position="1"/>
        <end position="245"/>
    </location>
</feature>